<feature type="chain" id="PRO_0000154085" description="Anthranilate synthase component 1">
    <location>
        <begin position="1"/>
        <end position="514"/>
    </location>
</feature>
<feature type="binding site" evidence="2">
    <location>
        <position position="40"/>
    </location>
    <ligand>
        <name>L-tryptophan</name>
        <dbReference type="ChEBI" id="CHEBI:57912"/>
    </ligand>
</feature>
<feature type="binding site" evidence="2">
    <location>
        <begin position="291"/>
        <end position="293"/>
    </location>
    <ligand>
        <name>L-tryptophan</name>
        <dbReference type="ChEBI" id="CHEBI:57912"/>
    </ligand>
</feature>
<feature type="binding site" evidence="2">
    <location>
        <begin position="328"/>
        <end position="329"/>
    </location>
    <ligand>
        <name>chorismate</name>
        <dbReference type="ChEBI" id="CHEBI:29748"/>
    </ligand>
</feature>
<feature type="binding site" evidence="2">
    <location>
        <position position="361"/>
    </location>
    <ligand>
        <name>Mg(2+)</name>
        <dbReference type="ChEBI" id="CHEBI:18420"/>
    </ligand>
</feature>
<feature type="binding site" evidence="2">
    <location>
        <position position="449"/>
    </location>
    <ligand>
        <name>chorismate</name>
        <dbReference type="ChEBI" id="CHEBI:29748"/>
    </ligand>
</feature>
<feature type="binding site" evidence="2">
    <location>
        <position position="469"/>
    </location>
    <ligand>
        <name>chorismate</name>
        <dbReference type="ChEBI" id="CHEBI:29748"/>
    </ligand>
</feature>
<feature type="binding site" evidence="2">
    <location>
        <begin position="482"/>
        <end position="484"/>
    </location>
    <ligand>
        <name>chorismate</name>
        <dbReference type="ChEBI" id="CHEBI:29748"/>
    </ligand>
</feature>
<feature type="binding site" evidence="2">
    <location>
        <position position="484"/>
    </location>
    <ligand>
        <name>chorismate</name>
        <dbReference type="ChEBI" id="CHEBI:29748"/>
    </ligand>
</feature>
<feature type="binding site" evidence="2">
    <location>
        <position position="497"/>
    </location>
    <ligand>
        <name>Mg(2+)</name>
        <dbReference type="ChEBI" id="CHEBI:18420"/>
    </ligand>
</feature>
<protein>
    <recommendedName>
        <fullName>Anthranilate synthase component 1</fullName>
        <shortName>AS</shortName>
        <shortName>ASI</shortName>
        <ecNumber>4.1.3.27</ecNumber>
    </recommendedName>
</protein>
<geneLocation type="plasmid">
    <name>pBRm</name>
</geneLocation>
<keyword id="KW-0028">Amino-acid biosynthesis</keyword>
<keyword id="KW-0057">Aromatic amino acid biosynthesis</keyword>
<keyword id="KW-0456">Lyase</keyword>
<keyword id="KW-0460">Magnesium</keyword>
<keyword id="KW-0479">Metal-binding</keyword>
<keyword id="KW-0614">Plasmid</keyword>
<keyword id="KW-0822">Tryptophan biosynthesis</keyword>
<comment type="function">
    <text evidence="1">Part of a heterotetrameric complex that catalyzes the two-step biosynthesis of anthranilate, an intermediate in the biosynthesis of L-tryptophan. In the first step, the glutamine-binding beta subunit (TrpG) of anthranilate synthase (AS) provides the glutamine amidotransferase activity which generates ammonia as a substrate that, along with chorismate, is used in the second step, catalyzed by the large alpha subunit of AS (TrpE) to produce anthranilate. In the absence of TrpG, TrpE can synthesize anthranilate directly from chorismate and high concentrations of ammonia (By similarity).</text>
</comment>
<comment type="catalytic activity">
    <reaction>
        <text>chorismate + L-glutamine = anthranilate + pyruvate + L-glutamate + H(+)</text>
        <dbReference type="Rhea" id="RHEA:21732"/>
        <dbReference type="ChEBI" id="CHEBI:15361"/>
        <dbReference type="ChEBI" id="CHEBI:15378"/>
        <dbReference type="ChEBI" id="CHEBI:16567"/>
        <dbReference type="ChEBI" id="CHEBI:29748"/>
        <dbReference type="ChEBI" id="CHEBI:29985"/>
        <dbReference type="ChEBI" id="CHEBI:58359"/>
        <dbReference type="EC" id="4.1.3.27"/>
    </reaction>
</comment>
<comment type="cofactor">
    <cofactor evidence="2">
        <name>Mg(2+)</name>
        <dbReference type="ChEBI" id="CHEBI:18420"/>
    </cofactor>
    <text evidence="2">Binds 1 Mg(2+) ion per subunit.</text>
</comment>
<comment type="activity regulation">
    <text evidence="1">Feedback inhibited by tryptophan.</text>
</comment>
<comment type="pathway">
    <text>Amino-acid biosynthesis; L-tryptophan biosynthesis; L-tryptophan from chorismate: step 1/5.</text>
</comment>
<comment type="subunit">
    <text evidence="1">Heterotetramer consisting of two non-identical subunits: a beta subunit (TrpG) and a large alpha subunit (TrpE).</text>
</comment>
<comment type="similarity">
    <text evidence="3">Belongs to the anthranilate synthase component I family.</text>
</comment>
<sequence length="514" mass="58772">MKKKPYQIEIIQKKAPYHPDPTMIFNHLCESRSATLLLETAEVNKKKDLESIMIIDSAIRISSKKNLVKLKPLSINGEEILLALKKRIPKKIEIYEKNKNIILVFPKIEKNLDEDKKLFSLSVFDAFRFMIKIFENKEKKSKAMFFGGLFSYDLSQFFESLPKLKGNQKCSNFCFYLAETLLVLDHQKKTCLIQNSLFTKNANEKKRIKERSIEIEKKLNEKLKSIPKVKITDINLTSNMNNFEYGSIIKKLQKLIQKGEIFQVVPSRKFYLPCPNPLSAYQKLKKSNPSPYMFFMQDKDFTLFGASPESSLKYDEKTRKIELYPIAGTRPRGRTEDGNLDLDLDSRIELEMRTNHKELAEHLMLVDLARNDLARICKPGSRYVSDLVKVDKYSHVMHLVSKVIGELKEGLDALHAYASCMNMGTLTGAPKVRAMQLIAEYEKEKRGSYGGAIGYFTDLGNLDTCITIRSAYVENIATIQAGAGIVYNSIPEDEVNESLNKAQAVINAIKNAHY</sequence>
<evidence type="ECO:0000250" key="1"/>
<evidence type="ECO:0000250" key="2">
    <source>
        <dbReference type="UniProtKB" id="P00897"/>
    </source>
</evidence>
<evidence type="ECO:0000305" key="3"/>
<reference key="1">
    <citation type="journal article" date="1996" name="J. Mol. Evol.">
        <title>The tryptophan biosynthetic pathway of aphid endosymbionts (Buchnera): genetics and evolution of plasmid-associated anthranilate synthase (trpEG) within the aphididae.</title>
        <authorList>
            <person name="Rouhbakhsh D."/>
            <person name="Lai C.-Y."/>
            <person name="von Dohlen C.D."/>
            <person name="Clark M.A."/>
            <person name="Baumann L."/>
            <person name="Baumann P."/>
            <person name="Moran N.A."/>
            <person name="Voegtlin D.J."/>
        </authorList>
    </citation>
    <scope>NUCLEOTIDE SEQUENCE [GENOMIC DNA]</scope>
</reference>
<accession>Q44689</accession>
<dbReference type="EC" id="4.1.3.27"/>
<dbReference type="EMBL" id="L43550">
    <property type="protein sequence ID" value="AAB05974.1"/>
    <property type="molecule type" value="Genomic_DNA"/>
</dbReference>
<dbReference type="SMR" id="Q44689"/>
<dbReference type="UniPathway" id="UPA00035">
    <property type="reaction ID" value="UER00040"/>
</dbReference>
<dbReference type="GO" id="GO:0004049">
    <property type="term" value="F:anthranilate synthase activity"/>
    <property type="evidence" value="ECO:0007669"/>
    <property type="project" value="UniProtKB-EC"/>
</dbReference>
<dbReference type="GO" id="GO:0046872">
    <property type="term" value="F:metal ion binding"/>
    <property type="evidence" value="ECO:0007669"/>
    <property type="project" value="UniProtKB-KW"/>
</dbReference>
<dbReference type="GO" id="GO:0000162">
    <property type="term" value="P:L-tryptophan biosynthetic process"/>
    <property type="evidence" value="ECO:0007669"/>
    <property type="project" value="UniProtKB-UniPathway"/>
</dbReference>
<dbReference type="Gene3D" id="3.60.120.10">
    <property type="entry name" value="Anthranilate synthase"/>
    <property type="match status" value="1"/>
</dbReference>
<dbReference type="InterPro" id="IPR005801">
    <property type="entry name" value="ADC_synthase"/>
</dbReference>
<dbReference type="InterPro" id="IPR019999">
    <property type="entry name" value="Anth_synth_I-like"/>
</dbReference>
<dbReference type="InterPro" id="IPR006805">
    <property type="entry name" value="Anth_synth_I_N"/>
</dbReference>
<dbReference type="InterPro" id="IPR005257">
    <property type="entry name" value="Anth_synth_I_TrpE"/>
</dbReference>
<dbReference type="InterPro" id="IPR015890">
    <property type="entry name" value="Chorismate_C"/>
</dbReference>
<dbReference type="NCBIfam" id="NF010079">
    <property type="entry name" value="PRK13564.1"/>
    <property type="match status" value="1"/>
</dbReference>
<dbReference type="NCBIfam" id="TIGR00565">
    <property type="entry name" value="trpE_proteo"/>
    <property type="match status" value="1"/>
</dbReference>
<dbReference type="PANTHER" id="PTHR11236">
    <property type="entry name" value="AMINOBENZOATE/ANTHRANILATE SYNTHASE"/>
    <property type="match status" value="1"/>
</dbReference>
<dbReference type="PANTHER" id="PTHR11236:SF49">
    <property type="entry name" value="ANTHRANILATE SYNTHASE COMPONENT 1"/>
    <property type="match status" value="1"/>
</dbReference>
<dbReference type="Pfam" id="PF04715">
    <property type="entry name" value="Anth_synt_I_N"/>
    <property type="match status" value="1"/>
</dbReference>
<dbReference type="Pfam" id="PF00425">
    <property type="entry name" value="Chorismate_bind"/>
    <property type="match status" value="1"/>
</dbReference>
<dbReference type="PIRSF" id="PIRSF001373">
    <property type="entry name" value="TrpE"/>
    <property type="match status" value="1"/>
</dbReference>
<dbReference type="PRINTS" id="PR00095">
    <property type="entry name" value="ANTSNTHASEI"/>
</dbReference>
<dbReference type="SUPFAM" id="SSF56322">
    <property type="entry name" value="ADC synthase"/>
    <property type="match status" value="1"/>
</dbReference>
<gene>
    <name type="primary">trpE</name>
</gene>
<proteinExistence type="inferred from homology"/>
<name>TRPE_BUCRM</name>
<organism>
    <name type="scientific">Buchnera aphidicola subsp. Rhopalosiphum maidis</name>
    <dbReference type="NCBI Taxonomy" id="118109"/>
    <lineage>
        <taxon>Bacteria</taxon>
        <taxon>Pseudomonadati</taxon>
        <taxon>Pseudomonadota</taxon>
        <taxon>Gammaproteobacteria</taxon>
        <taxon>Enterobacterales</taxon>
        <taxon>Erwiniaceae</taxon>
        <taxon>Buchnera</taxon>
    </lineage>
</organism>